<comment type="function">
    <text evidence="5">May play a role in a signaling cascade by enhancing the kinase activity of SRC. Contributes to SRC-regulated transcription activation.</text>
</comment>
<comment type="subunit">
    <text evidence="5 6">Interacts with SRC. Interacts with LCK when tyrosine phosphorylated.</text>
</comment>
<comment type="subcellular location">
    <subcellularLocation>
        <location evidence="5">Cytoplasm</location>
    </subcellularLocation>
</comment>
<comment type="alternative products">
    <event type="alternative splicing"/>
    <isoform>
        <id>Q8N4X5-1</id>
        <name>1</name>
        <sequence type="displayed"/>
    </isoform>
    <isoform>
        <id>Q8N4X5-2</id>
        <name>2</name>
        <sequence type="described" ref="VSP_014255"/>
    </isoform>
    <isoform>
        <id>Q8N4X5-3</id>
        <name>3</name>
        <sequence type="described" ref="VSP_014254 VSP_014256"/>
    </isoform>
    <isoform>
        <id>Q8N4X5-4</id>
        <name>4</name>
        <sequence type="described" ref="VSP_036211 VSP_014255"/>
    </isoform>
</comment>
<comment type="tissue specificity">
    <text evidence="5">Detected in spleen and thyroid, and at lower levels in kidney, brain, lung and pancreas.</text>
</comment>
<comment type="PTM">
    <text evidence="5 6">Tyrosine phosphorylated (by SRC).</text>
</comment>
<comment type="sequence caution" evidence="10">
    <conflict type="erroneous initiation">
        <sequence resource="EMBL-CDS" id="BAB67807"/>
    </conflict>
</comment>
<keyword id="KW-0002">3D-structure</keyword>
<keyword id="KW-0025">Alternative splicing</keyword>
<keyword id="KW-0175">Coiled coil</keyword>
<keyword id="KW-0963">Cytoplasm</keyword>
<keyword id="KW-0597">Phosphoprotein</keyword>
<keyword id="KW-1267">Proteomics identification</keyword>
<keyword id="KW-1185">Reference proteome</keyword>
<keyword id="KW-0677">Repeat</keyword>
<name>AF1L2_HUMAN</name>
<reference key="1">
    <citation type="submission" date="2002-01" db="EMBL/GenBank/DDBJ databases">
        <title>XB130, a novel adaptor protein for Src binding and activation.</title>
        <authorList>
            <person name="Bai X.-H."/>
            <person name="Keshavjee S."/>
            <person name="Liu M."/>
        </authorList>
    </citation>
    <scope>NUCLEOTIDE SEQUENCE [MRNA] (ISOFORM 1)</scope>
</reference>
<reference key="2">
    <citation type="journal article" date="2001" name="DNA Res.">
        <title>Prediction of the coding sequences of unidentified human genes. XXI. The complete sequences of 60 new cDNA clones from brain which code for large proteins.</title>
        <authorList>
            <person name="Nagase T."/>
            <person name="Kikuno R."/>
            <person name="Ohara O."/>
        </authorList>
    </citation>
    <scope>NUCLEOTIDE SEQUENCE [LARGE SCALE MRNA] (ISOFORM 3)</scope>
    <source>
        <tissue>Brain</tissue>
    </source>
</reference>
<reference key="3">
    <citation type="journal article" date="2004" name="Nature">
        <title>The DNA sequence and comparative analysis of human chromosome 10.</title>
        <authorList>
            <person name="Deloukas P."/>
            <person name="Earthrowl M.E."/>
            <person name="Grafham D.V."/>
            <person name="Rubenfield M."/>
            <person name="French L."/>
            <person name="Steward C.A."/>
            <person name="Sims S.K."/>
            <person name="Jones M.C."/>
            <person name="Searle S."/>
            <person name="Scott C."/>
            <person name="Howe K."/>
            <person name="Hunt S.E."/>
            <person name="Andrews T.D."/>
            <person name="Gilbert J.G.R."/>
            <person name="Swarbreck D."/>
            <person name="Ashurst J.L."/>
            <person name="Taylor A."/>
            <person name="Battles J."/>
            <person name="Bird C.P."/>
            <person name="Ainscough R."/>
            <person name="Almeida J.P."/>
            <person name="Ashwell R.I.S."/>
            <person name="Ambrose K.D."/>
            <person name="Babbage A.K."/>
            <person name="Bagguley C.L."/>
            <person name="Bailey J."/>
            <person name="Banerjee R."/>
            <person name="Bates K."/>
            <person name="Beasley H."/>
            <person name="Bray-Allen S."/>
            <person name="Brown A.J."/>
            <person name="Brown J.Y."/>
            <person name="Burford D.C."/>
            <person name="Burrill W."/>
            <person name="Burton J."/>
            <person name="Cahill P."/>
            <person name="Camire D."/>
            <person name="Carter N.P."/>
            <person name="Chapman J.C."/>
            <person name="Clark S.Y."/>
            <person name="Clarke G."/>
            <person name="Clee C.M."/>
            <person name="Clegg S."/>
            <person name="Corby N."/>
            <person name="Coulson A."/>
            <person name="Dhami P."/>
            <person name="Dutta I."/>
            <person name="Dunn M."/>
            <person name="Faulkner L."/>
            <person name="Frankish A."/>
            <person name="Frankland J.A."/>
            <person name="Garner P."/>
            <person name="Garnett J."/>
            <person name="Gribble S."/>
            <person name="Griffiths C."/>
            <person name="Grocock R."/>
            <person name="Gustafson E."/>
            <person name="Hammond S."/>
            <person name="Harley J.L."/>
            <person name="Hart E."/>
            <person name="Heath P.D."/>
            <person name="Ho T.P."/>
            <person name="Hopkins B."/>
            <person name="Horne J."/>
            <person name="Howden P.J."/>
            <person name="Huckle E."/>
            <person name="Hynds C."/>
            <person name="Johnson C."/>
            <person name="Johnson D."/>
            <person name="Kana A."/>
            <person name="Kay M."/>
            <person name="Kimberley A.M."/>
            <person name="Kershaw J.K."/>
            <person name="Kokkinaki M."/>
            <person name="Laird G.K."/>
            <person name="Lawlor S."/>
            <person name="Lee H.M."/>
            <person name="Leongamornlert D.A."/>
            <person name="Laird G."/>
            <person name="Lloyd C."/>
            <person name="Lloyd D.M."/>
            <person name="Loveland J."/>
            <person name="Lovell J."/>
            <person name="McLaren S."/>
            <person name="McLay K.E."/>
            <person name="McMurray A."/>
            <person name="Mashreghi-Mohammadi M."/>
            <person name="Matthews L."/>
            <person name="Milne S."/>
            <person name="Nickerson T."/>
            <person name="Nguyen M."/>
            <person name="Overton-Larty E."/>
            <person name="Palmer S.A."/>
            <person name="Pearce A.V."/>
            <person name="Peck A.I."/>
            <person name="Pelan S."/>
            <person name="Phillimore B."/>
            <person name="Porter K."/>
            <person name="Rice C.M."/>
            <person name="Rogosin A."/>
            <person name="Ross M.T."/>
            <person name="Sarafidou T."/>
            <person name="Sehra H.K."/>
            <person name="Shownkeen R."/>
            <person name="Skuce C.D."/>
            <person name="Smith M."/>
            <person name="Standring L."/>
            <person name="Sycamore N."/>
            <person name="Tester J."/>
            <person name="Thorpe A."/>
            <person name="Torcasso W."/>
            <person name="Tracey A."/>
            <person name="Tromans A."/>
            <person name="Tsolas J."/>
            <person name="Wall M."/>
            <person name="Walsh J."/>
            <person name="Wang H."/>
            <person name="Weinstock K."/>
            <person name="West A.P."/>
            <person name="Willey D.L."/>
            <person name="Whitehead S.L."/>
            <person name="Wilming L."/>
            <person name="Wray P.W."/>
            <person name="Young L."/>
            <person name="Chen Y."/>
            <person name="Lovering R.C."/>
            <person name="Moschonas N.K."/>
            <person name="Siebert R."/>
            <person name="Fechtel K."/>
            <person name="Bentley D."/>
            <person name="Durbin R.M."/>
            <person name="Hubbard T."/>
            <person name="Doucette-Stamm L."/>
            <person name="Beck S."/>
            <person name="Smith D.R."/>
            <person name="Rogers J."/>
        </authorList>
    </citation>
    <scope>NUCLEOTIDE SEQUENCE [LARGE SCALE GENOMIC DNA]</scope>
</reference>
<reference key="4">
    <citation type="journal article" date="2004" name="Nat. Genet.">
        <title>Complete sequencing and characterization of 21,243 full-length human cDNAs.</title>
        <authorList>
            <person name="Ota T."/>
            <person name="Suzuki Y."/>
            <person name="Nishikawa T."/>
            <person name="Otsuki T."/>
            <person name="Sugiyama T."/>
            <person name="Irie R."/>
            <person name="Wakamatsu A."/>
            <person name="Hayashi K."/>
            <person name="Sato H."/>
            <person name="Nagai K."/>
            <person name="Kimura K."/>
            <person name="Makita H."/>
            <person name="Sekine M."/>
            <person name="Obayashi M."/>
            <person name="Nishi T."/>
            <person name="Shibahara T."/>
            <person name="Tanaka T."/>
            <person name="Ishii S."/>
            <person name="Yamamoto J."/>
            <person name="Saito K."/>
            <person name="Kawai Y."/>
            <person name="Isono Y."/>
            <person name="Nakamura Y."/>
            <person name="Nagahari K."/>
            <person name="Murakami K."/>
            <person name="Yasuda T."/>
            <person name="Iwayanagi T."/>
            <person name="Wagatsuma M."/>
            <person name="Shiratori A."/>
            <person name="Sudo H."/>
            <person name="Hosoiri T."/>
            <person name="Kaku Y."/>
            <person name="Kodaira H."/>
            <person name="Kondo H."/>
            <person name="Sugawara M."/>
            <person name="Takahashi M."/>
            <person name="Kanda K."/>
            <person name="Yokoi T."/>
            <person name="Furuya T."/>
            <person name="Kikkawa E."/>
            <person name="Omura Y."/>
            <person name="Abe K."/>
            <person name="Kamihara K."/>
            <person name="Katsuta N."/>
            <person name="Sato K."/>
            <person name="Tanikawa M."/>
            <person name="Yamazaki M."/>
            <person name="Ninomiya K."/>
            <person name="Ishibashi T."/>
            <person name="Yamashita H."/>
            <person name="Murakawa K."/>
            <person name="Fujimori K."/>
            <person name="Tanai H."/>
            <person name="Kimata M."/>
            <person name="Watanabe M."/>
            <person name="Hiraoka S."/>
            <person name="Chiba Y."/>
            <person name="Ishida S."/>
            <person name="Ono Y."/>
            <person name="Takiguchi S."/>
            <person name="Watanabe S."/>
            <person name="Yosida M."/>
            <person name="Hotuta T."/>
            <person name="Kusano J."/>
            <person name="Kanehori K."/>
            <person name="Takahashi-Fujii A."/>
            <person name="Hara H."/>
            <person name="Tanase T.-O."/>
            <person name="Nomura Y."/>
            <person name="Togiya S."/>
            <person name="Komai F."/>
            <person name="Hara R."/>
            <person name="Takeuchi K."/>
            <person name="Arita M."/>
            <person name="Imose N."/>
            <person name="Musashino K."/>
            <person name="Yuuki H."/>
            <person name="Oshima A."/>
            <person name="Sasaki N."/>
            <person name="Aotsuka S."/>
            <person name="Yoshikawa Y."/>
            <person name="Matsunawa H."/>
            <person name="Ichihara T."/>
            <person name="Shiohata N."/>
            <person name="Sano S."/>
            <person name="Moriya S."/>
            <person name="Momiyama H."/>
            <person name="Satoh N."/>
            <person name="Takami S."/>
            <person name="Terashima Y."/>
            <person name="Suzuki O."/>
            <person name="Nakagawa S."/>
            <person name="Senoh A."/>
            <person name="Mizoguchi H."/>
            <person name="Goto Y."/>
            <person name="Shimizu F."/>
            <person name="Wakebe H."/>
            <person name="Hishigaki H."/>
            <person name="Watanabe T."/>
            <person name="Sugiyama A."/>
            <person name="Takemoto M."/>
            <person name="Kawakami B."/>
            <person name="Yamazaki M."/>
            <person name="Watanabe K."/>
            <person name="Kumagai A."/>
            <person name="Itakura S."/>
            <person name="Fukuzumi Y."/>
            <person name="Fujimori Y."/>
            <person name="Komiyama M."/>
            <person name="Tashiro H."/>
            <person name="Tanigami A."/>
            <person name="Fujiwara T."/>
            <person name="Ono T."/>
            <person name="Yamada K."/>
            <person name="Fujii Y."/>
            <person name="Ozaki K."/>
            <person name="Hirao M."/>
            <person name="Ohmori Y."/>
            <person name="Kawabata A."/>
            <person name="Hikiji T."/>
            <person name="Kobatake N."/>
            <person name="Inagaki H."/>
            <person name="Ikema Y."/>
            <person name="Okamoto S."/>
            <person name="Okitani R."/>
            <person name="Kawakami T."/>
            <person name="Noguchi S."/>
            <person name="Itoh T."/>
            <person name="Shigeta K."/>
            <person name="Senba T."/>
            <person name="Matsumura K."/>
            <person name="Nakajima Y."/>
            <person name="Mizuno T."/>
            <person name="Morinaga M."/>
            <person name="Sasaki M."/>
            <person name="Togashi T."/>
            <person name="Oyama M."/>
            <person name="Hata H."/>
            <person name="Watanabe M."/>
            <person name="Komatsu T."/>
            <person name="Mizushima-Sugano J."/>
            <person name="Satoh T."/>
            <person name="Shirai Y."/>
            <person name="Takahashi Y."/>
            <person name="Nakagawa K."/>
            <person name="Okumura K."/>
            <person name="Nagase T."/>
            <person name="Nomura N."/>
            <person name="Kikuchi H."/>
            <person name="Masuho Y."/>
            <person name="Yamashita R."/>
            <person name="Nakai K."/>
            <person name="Yada T."/>
            <person name="Nakamura Y."/>
            <person name="Ohara O."/>
            <person name="Isogai T."/>
            <person name="Sugano S."/>
        </authorList>
    </citation>
    <scope>NUCLEOTIDE SEQUENCE [LARGE SCALE MRNA] (ISOFORMS 1 AND 4)</scope>
    <source>
        <tissue>Cerebellum</tissue>
        <tissue>Placenta</tissue>
    </source>
</reference>
<reference key="5">
    <citation type="journal article" date="2004" name="Genome Res.">
        <title>The status, quality, and expansion of the NIH full-length cDNA project: the Mammalian Gene Collection (MGC).</title>
        <authorList>
            <consortium name="The MGC Project Team"/>
        </authorList>
    </citation>
    <scope>NUCLEOTIDE SEQUENCE [LARGE SCALE MRNA] (ISOFORMS 1 AND 2)</scope>
    <source>
        <tissue>Pancreas</tissue>
    </source>
</reference>
<reference key="6">
    <citation type="journal article" date="2007" name="J. Biol. Chem.">
        <title>XB130, a novel adaptor protein for signal transduction.</title>
        <authorList>
            <person name="Xu J."/>
            <person name="Bai X.-H."/>
            <person name="Lodyga M."/>
            <person name="Han B."/>
            <person name="Xiao H."/>
            <person name="Keshavjee S."/>
            <person name="Hu J."/>
            <person name="Zhang H."/>
            <person name="Yang B.B."/>
            <person name="Liu M."/>
        </authorList>
    </citation>
    <scope>FUNCTION</scope>
    <scope>INTERACTION WITH SRC</scope>
    <scope>SUBCELLULAR LOCATION</scope>
    <scope>TISSUE SPECIFICITY</scope>
    <scope>MUTAGENESIS OF TYR-4</scope>
    <scope>PHOSPHORYLATION</scope>
</reference>
<reference key="7">
    <citation type="journal article" date="2008" name="Cell Commun. Signal.">
        <title>Odin (ANKS1A) is a Src family kinase target in colorectal cancer cells.</title>
        <authorList>
            <person name="Emaduddin M."/>
            <person name="Edelmann M.J."/>
            <person name="Kessler B.M."/>
            <person name="Feller S.M."/>
        </authorList>
    </citation>
    <scope>PHOSPHORYLATION</scope>
    <scope>INTERACTION WITH LCK</scope>
    <scope>IDENTIFICATION BY MASS SPECTROMETRY</scope>
</reference>
<reference key="8">
    <citation type="journal article" date="2011" name="BMC Syst. Biol.">
        <title>Initial characterization of the human central proteome.</title>
        <authorList>
            <person name="Burkard T.R."/>
            <person name="Planyavsky M."/>
            <person name="Kaupe I."/>
            <person name="Breitwieser F.P."/>
            <person name="Buerckstuemmer T."/>
            <person name="Bennett K.L."/>
            <person name="Superti-Furga G."/>
            <person name="Colinge J."/>
        </authorList>
    </citation>
    <scope>IDENTIFICATION BY MASS SPECTROMETRY [LARGE SCALE ANALYSIS]</scope>
</reference>
<reference key="9">
    <citation type="journal article" date="2014" name="J. Proteomics">
        <title>An enzyme assisted RP-RPLC approach for in-depth analysis of human liver phosphoproteome.</title>
        <authorList>
            <person name="Bian Y."/>
            <person name="Song C."/>
            <person name="Cheng K."/>
            <person name="Dong M."/>
            <person name="Wang F."/>
            <person name="Huang J."/>
            <person name="Sun D."/>
            <person name="Wang L."/>
            <person name="Ye M."/>
            <person name="Zou H."/>
        </authorList>
    </citation>
    <scope>IDENTIFICATION BY MASS SPECTROMETRY [LARGE SCALE ANALYSIS]</scope>
    <source>
        <tissue>Liver</tissue>
    </source>
</reference>
<reference key="10">
    <citation type="submission" date="2005-11" db="PDB data bank">
        <title>Solution structure of the C-terminal PH domain of hypothetical protein KIAA1914 from human.</title>
        <authorList>
            <consortium name="RIKEN structural genomics initiative (RSGI)"/>
        </authorList>
    </citation>
    <scope>STRUCTURE BY NMR OF 354-448</scope>
</reference>
<protein>
    <recommendedName>
        <fullName>Actin filament-associated protein 1-like 2</fullName>
        <shortName>AFAP1-like protein 2</shortName>
    </recommendedName>
</protein>
<sequence>MERYKALEQLLTELDDFLKILDQENLSSTALVKKSCLAELLRLYTKSSSSDEEYIYMNKVTINKQQNAESQGKAPEEQGLLPNGEPSQHSSAPQKSLPDLPPPKMIPERKQLAIPKTESPEGYYEEAEPYDTSLNEDGEAVSSSYESYDEEDGSKGKSAPYQWPSPEAGIELMRDARICAFLWRKKWLGQWAKQLCVIKDNRLLCYKSSKDHSPQLDVNLLGSSVIHKEKQVRKKEHKLKITPMNADVIVLGLQSKDQAEQWLRVIQEVSGLPSEGASEGNQYTPDAQRFNCQKPDIAEKYLSASEYGSSVDGHPEVPETKDVKKKCSAGLKLSNLMNLGRKKSTSLEPVERSLETSSYLNVLVNSQWKSRWCSVRDNHLHFYQDRNRSKVAQQPLSLVGCEVVPDPSPDHLYSFRILHKGEELAKLEAKSSEEMGHWLGLLLSESGSKTDPEEFTYDYVDADRVSCIVSAAKNSLLLMQRKFSEPNTYIDGLPSQDRQEELYDDVDLSELTAAVEPTEEATPVADDPNERESDRVYLDLTPVKSFLHGPSSAQAQASSPTLSCLDNATEALPADSGPGPTPDEPCIKCPENLGEQQLESLEPEDPSLRITTVKIQTEQQRISFPPSCPDAVVATPPGASPPVKDRLRVTSAEIKLGKNRTEAEVKRYTEEKERLEKKKEEIRGHLAQLRKEKRELKETLLKCTDKEVLASLEQKLKEIDEECRGEESRRVDLELSIMEVKDNLKKAEAGPVTLGTTVDTTHLENVSPRPKAVTPASAPDCTPVNSATTLKNRPLSVVVTGKGTVLQKAKEWEKKGAS</sequence>
<accession>Q8N4X5</accession>
<accession>A8K6P7</accession>
<accession>B3KVQ8</accession>
<accession>Q2UZW3</accession>
<accession>Q8TB54</accession>
<accession>Q96PX4</accession>
<accession>Q96SY5</accession>
<proteinExistence type="evidence at protein level"/>
<gene>
    <name type="primary">AFAP1L2</name>
    <name type="synonym">KIAA1914</name>
    <name type="synonym">XB130</name>
</gene>
<dbReference type="EMBL" id="AF474151">
    <property type="protein sequence ID" value="AAQ05765.1"/>
    <property type="molecule type" value="mRNA"/>
</dbReference>
<dbReference type="EMBL" id="AB067501">
    <property type="protein sequence ID" value="BAB67807.1"/>
    <property type="status" value="ALT_INIT"/>
    <property type="molecule type" value="mRNA"/>
</dbReference>
<dbReference type="EMBL" id="AC005383">
    <property type="status" value="NOT_ANNOTATED_CDS"/>
    <property type="molecule type" value="Genomic_DNA"/>
</dbReference>
<dbReference type="EMBL" id="AL133384">
    <property type="status" value="NOT_ANNOTATED_CDS"/>
    <property type="molecule type" value="Genomic_DNA"/>
</dbReference>
<dbReference type="EMBL" id="AL355302">
    <property type="status" value="NOT_ANNOTATED_CDS"/>
    <property type="molecule type" value="Genomic_DNA"/>
</dbReference>
<dbReference type="EMBL" id="AK027470">
    <property type="protein sequence ID" value="BAB55135.1"/>
    <property type="molecule type" value="mRNA"/>
</dbReference>
<dbReference type="EMBL" id="AK291712">
    <property type="protein sequence ID" value="BAF84401.1"/>
    <property type="molecule type" value="mRNA"/>
</dbReference>
<dbReference type="EMBL" id="AK123108">
    <property type="protein sequence ID" value="BAG53870.1"/>
    <property type="molecule type" value="mRNA"/>
</dbReference>
<dbReference type="EMBL" id="BC024314">
    <property type="protein sequence ID" value="AAH24314.1"/>
    <property type="molecule type" value="mRNA"/>
</dbReference>
<dbReference type="EMBL" id="BC033212">
    <property type="protein sequence ID" value="AAH33212.1"/>
    <property type="molecule type" value="mRNA"/>
</dbReference>
<dbReference type="CCDS" id="CCDS31286.1">
    <molecule id="Q8N4X5-1"/>
</dbReference>
<dbReference type="CCDS" id="CCDS31287.1">
    <molecule id="Q8N4X5-2"/>
</dbReference>
<dbReference type="CCDS" id="CCDS91356.1">
    <molecule id="Q8N4X5-4"/>
</dbReference>
<dbReference type="RefSeq" id="NP_001001936.1">
    <molecule id="Q8N4X5-1"/>
    <property type="nucleotide sequence ID" value="NM_001001936.3"/>
</dbReference>
<dbReference type="RefSeq" id="NP_001274753.1">
    <property type="nucleotide sequence ID" value="NM_001287824.1"/>
</dbReference>
<dbReference type="RefSeq" id="NP_115939.1">
    <molecule id="Q8N4X5-2"/>
    <property type="nucleotide sequence ID" value="NM_032550.4"/>
</dbReference>
<dbReference type="PDB" id="2COF">
    <property type="method" value="NMR"/>
    <property type="chains" value="A=354-447"/>
</dbReference>
<dbReference type="PDBsum" id="2COF"/>
<dbReference type="BMRB" id="Q8N4X5"/>
<dbReference type="SMR" id="Q8N4X5"/>
<dbReference type="BioGRID" id="124161">
    <property type="interactions" value="21"/>
</dbReference>
<dbReference type="FunCoup" id="Q8N4X5">
    <property type="interactions" value="642"/>
</dbReference>
<dbReference type="IntAct" id="Q8N4X5">
    <property type="interactions" value="8"/>
</dbReference>
<dbReference type="MINT" id="Q8N4X5"/>
<dbReference type="STRING" id="9606.ENSP00000303042"/>
<dbReference type="GlyCosmos" id="Q8N4X5">
    <property type="glycosylation" value="1 site, 1 glycan"/>
</dbReference>
<dbReference type="GlyGen" id="Q8N4X5">
    <property type="glycosylation" value="3 sites, 1 O-linked glycan (1 site)"/>
</dbReference>
<dbReference type="iPTMnet" id="Q8N4X5"/>
<dbReference type="PhosphoSitePlus" id="Q8N4X5"/>
<dbReference type="BioMuta" id="AFAP1L2"/>
<dbReference type="DMDM" id="68052360"/>
<dbReference type="jPOST" id="Q8N4X5"/>
<dbReference type="MassIVE" id="Q8N4X5"/>
<dbReference type="PaxDb" id="9606-ENSP00000303042"/>
<dbReference type="PeptideAtlas" id="Q8N4X5"/>
<dbReference type="ProteomicsDB" id="71986">
    <molecule id="Q8N4X5-1"/>
</dbReference>
<dbReference type="ProteomicsDB" id="71987">
    <molecule id="Q8N4X5-2"/>
</dbReference>
<dbReference type="ProteomicsDB" id="71988">
    <molecule id="Q8N4X5-3"/>
</dbReference>
<dbReference type="ProteomicsDB" id="71989">
    <molecule id="Q8N4X5-4"/>
</dbReference>
<dbReference type="Antibodypedia" id="31934">
    <property type="antibodies" value="134 antibodies from 34 providers"/>
</dbReference>
<dbReference type="DNASU" id="84632"/>
<dbReference type="Ensembl" id="ENST00000304129.9">
    <molecule id="Q8N4X5-1"/>
    <property type="protein sequence ID" value="ENSP00000303042.4"/>
    <property type="gene ID" value="ENSG00000169129.16"/>
</dbReference>
<dbReference type="Ensembl" id="ENST00000369271.7">
    <molecule id="Q8N4X5-2"/>
    <property type="protein sequence ID" value="ENSP00000358276.3"/>
    <property type="gene ID" value="ENSG00000169129.16"/>
</dbReference>
<dbReference type="GeneID" id="84632"/>
<dbReference type="KEGG" id="hsa:84632"/>
<dbReference type="MANE-Select" id="ENST00000304129.9">
    <property type="protein sequence ID" value="ENSP00000303042.4"/>
    <property type="RefSeq nucleotide sequence ID" value="NM_001001936.3"/>
    <property type="RefSeq protein sequence ID" value="NP_001001936.1"/>
</dbReference>
<dbReference type="UCSC" id="uc001lbn.5">
    <molecule id="Q8N4X5-1"/>
    <property type="organism name" value="human"/>
</dbReference>
<dbReference type="AGR" id="HGNC:25901"/>
<dbReference type="CTD" id="84632"/>
<dbReference type="DisGeNET" id="84632"/>
<dbReference type="GeneCards" id="AFAP1L2"/>
<dbReference type="HGNC" id="HGNC:25901">
    <property type="gene designation" value="AFAP1L2"/>
</dbReference>
<dbReference type="HPA" id="ENSG00000169129">
    <property type="expression patterns" value="Tissue enhanced (lymphoid tissue, parathyroid gland, thyroid gland)"/>
</dbReference>
<dbReference type="MIM" id="612420">
    <property type="type" value="gene"/>
</dbReference>
<dbReference type="neXtProt" id="NX_Q8N4X5"/>
<dbReference type="OpenTargets" id="ENSG00000169129"/>
<dbReference type="PharmGKB" id="PA162375773"/>
<dbReference type="VEuPathDB" id="HostDB:ENSG00000169129"/>
<dbReference type="eggNOG" id="ENOG502QQA8">
    <property type="taxonomic scope" value="Eukaryota"/>
</dbReference>
<dbReference type="GeneTree" id="ENSGT00950000183067"/>
<dbReference type="HOGENOM" id="CLU_014418_0_0_1"/>
<dbReference type="InParanoid" id="Q8N4X5"/>
<dbReference type="OMA" id="FPPNCPD"/>
<dbReference type="OrthoDB" id="8443615at2759"/>
<dbReference type="PAN-GO" id="Q8N4X5">
    <property type="GO annotations" value="9 GO annotations based on evolutionary models"/>
</dbReference>
<dbReference type="PhylomeDB" id="Q8N4X5"/>
<dbReference type="TreeFam" id="TF332622"/>
<dbReference type="PathwayCommons" id="Q8N4X5"/>
<dbReference type="SignaLink" id="Q8N4X5"/>
<dbReference type="SIGNOR" id="Q8N4X5"/>
<dbReference type="BioGRID-ORCS" id="84632">
    <property type="hits" value="9 hits in 1151 CRISPR screens"/>
</dbReference>
<dbReference type="ChiTaRS" id="AFAP1L2">
    <property type="organism name" value="human"/>
</dbReference>
<dbReference type="EvolutionaryTrace" id="Q8N4X5"/>
<dbReference type="GenomeRNAi" id="84632"/>
<dbReference type="Pharos" id="Q8N4X5">
    <property type="development level" value="Tbio"/>
</dbReference>
<dbReference type="PRO" id="PR:Q8N4X5"/>
<dbReference type="Proteomes" id="UP000005640">
    <property type="component" value="Chromosome 10"/>
</dbReference>
<dbReference type="RNAct" id="Q8N4X5">
    <property type="molecule type" value="protein"/>
</dbReference>
<dbReference type="Bgee" id="ENSG00000169129">
    <property type="expression patterns" value="Expressed in sural nerve and 145 other cell types or tissues"/>
</dbReference>
<dbReference type="ExpressionAtlas" id="Q8N4X5">
    <property type="expression patterns" value="baseline and differential"/>
</dbReference>
<dbReference type="GO" id="GO:0005737">
    <property type="term" value="C:cytoplasm"/>
    <property type="evidence" value="ECO:0000314"/>
    <property type="project" value="HGNC-UCL"/>
</dbReference>
<dbReference type="GO" id="GO:0005829">
    <property type="term" value="C:cytosol"/>
    <property type="evidence" value="ECO:0000314"/>
    <property type="project" value="HPA"/>
</dbReference>
<dbReference type="GO" id="GO:0005886">
    <property type="term" value="C:plasma membrane"/>
    <property type="evidence" value="ECO:0000314"/>
    <property type="project" value="HPA"/>
</dbReference>
<dbReference type="GO" id="GO:0030296">
    <property type="term" value="F:protein tyrosine kinase activator activity"/>
    <property type="evidence" value="ECO:0000314"/>
    <property type="project" value="HGNC-UCL"/>
</dbReference>
<dbReference type="GO" id="GO:0042169">
    <property type="term" value="F:SH2 domain binding"/>
    <property type="evidence" value="ECO:0000353"/>
    <property type="project" value="HGNC-UCL"/>
</dbReference>
<dbReference type="GO" id="GO:0017124">
    <property type="term" value="F:SH3 domain binding"/>
    <property type="evidence" value="ECO:0000353"/>
    <property type="project" value="HGNC-UCL"/>
</dbReference>
<dbReference type="GO" id="GO:0006954">
    <property type="term" value="P:inflammatory response"/>
    <property type="evidence" value="ECO:0000314"/>
    <property type="project" value="HGNC-UCL"/>
</dbReference>
<dbReference type="GO" id="GO:0045893">
    <property type="term" value="P:positive regulation of DNA-templated transcription"/>
    <property type="evidence" value="ECO:0000314"/>
    <property type="project" value="HGNC-UCL"/>
</dbReference>
<dbReference type="GO" id="GO:0045742">
    <property type="term" value="P:positive regulation of epidermal growth factor receptor signaling pathway"/>
    <property type="evidence" value="ECO:0000314"/>
    <property type="project" value="HGNC-UCL"/>
</dbReference>
<dbReference type="GO" id="GO:0032757">
    <property type="term" value="P:positive regulation of interleukin-8 production"/>
    <property type="evidence" value="ECO:0000314"/>
    <property type="project" value="HGNC-UCL"/>
</dbReference>
<dbReference type="GO" id="GO:0032675">
    <property type="term" value="P:regulation of interleukin-6 production"/>
    <property type="evidence" value="ECO:0000314"/>
    <property type="project" value="HGNC-UCL"/>
</dbReference>
<dbReference type="GO" id="GO:0007346">
    <property type="term" value="P:regulation of mitotic cell cycle"/>
    <property type="evidence" value="ECO:0000314"/>
    <property type="project" value="HGNC-UCL"/>
</dbReference>
<dbReference type="CDD" id="cd13306">
    <property type="entry name" value="PH1_AFAP"/>
    <property type="match status" value="1"/>
</dbReference>
<dbReference type="CDD" id="cd13307">
    <property type="entry name" value="PH2_AFAP"/>
    <property type="match status" value="1"/>
</dbReference>
<dbReference type="FunFam" id="2.30.29.30:FF:000020">
    <property type="entry name" value="Actin filament-associated protein 1-like 2 isoform 1"/>
    <property type="match status" value="1"/>
</dbReference>
<dbReference type="FunFam" id="2.30.29.30:FF:000171">
    <property type="entry name" value="Actin filament-associated protein 1-like 2 isoform 1"/>
    <property type="match status" value="1"/>
</dbReference>
<dbReference type="Gene3D" id="2.30.29.30">
    <property type="entry name" value="Pleckstrin-homology domain (PH domain)/Phosphotyrosine-binding domain (PTB)"/>
    <property type="match status" value="2"/>
</dbReference>
<dbReference type="InterPro" id="IPR030113">
    <property type="entry name" value="AFAP"/>
</dbReference>
<dbReference type="InterPro" id="IPR011993">
    <property type="entry name" value="PH-like_dom_sf"/>
</dbReference>
<dbReference type="InterPro" id="IPR001849">
    <property type="entry name" value="PH_domain"/>
</dbReference>
<dbReference type="PANTHER" id="PTHR14338">
    <property type="entry name" value="ACTIN FILAMENT-ASSOCIATED PROTEIN 1 FAMILY MEMBER"/>
    <property type="match status" value="1"/>
</dbReference>
<dbReference type="PANTHER" id="PTHR14338:SF4">
    <property type="entry name" value="ACTIN FILAMENT-ASSOCIATED PROTEIN 1-LIKE 2"/>
    <property type="match status" value="1"/>
</dbReference>
<dbReference type="Pfam" id="PF00169">
    <property type="entry name" value="PH"/>
    <property type="match status" value="2"/>
</dbReference>
<dbReference type="SMART" id="SM00233">
    <property type="entry name" value="PH"/>
    <property type="match status" value="2"/>
</dbReference>
<dbReference type="SUPFAM" id="SSF50729">
    <property type="entry name" value="PH domain-like"/>
    <property type="match status" value="2"/>
</dbReference>
<dbReference type="PROSITE" id="PS50003">
    <property type="entry name" value="PH_DOMAIN"/>
    <property type="match status" value="2"/>
</dbReference>
<feature type="chain" id="PRO_0000050805" description="Actin filament-associated protein 1-like 2">
    <location>
        <begin position="1"/>
        <end position="818"/>
    </location>
</feature>
<feature type="domain" description="PH 1" evidence="3">
    <location>
        <begin position="175"/>
        <end position="271"/>
    </location>
</feature>
<feature type="domain" description="PH 2" evidence="3">
    <location>
        <begin position="353"/>
        <end position="447"/>
    </location>
</feature>
<feature type="region of interest" description="Disordered" evidence="4">
    <location>
        <begin position="66"/>
        <end position="163"/>
    </location>
</feature>
<feature type="region of interest" description="Disordered" evidence="4">
    <location>
        <begin position="513"/>
        <end position="532"/>
    </location>
</feature>
<feature type="region of interest" description="Disordered" evidence="4">
    <location>
        <begin position="765"/>
        <end position="787"/>
    </location>
</feature>
<feature type="coiled-coil region" evidence="2">
    <location>
        <begin position="652"/>
        <end position="749"/>
    </location>
</feature>
<feature type="compositionally biased region" description="Polar residues" evidence="4">
    <location>
        <begin position="85"/>
        <end position="94"/>
    </location>
</feature>
<feature type="compositionally biased region" description="Acidic residues" evidence="4">
    <location>
        <begin position="123"/>
        <end position="139"/>
    </location>
</feature>
<feature type="modified residue" description="Phosphotyrosine" evidence="1">
    <location>
        <position position="56"/>
    </location>
</feature>
<feature type="modified residue" description="Phosphoserine" evidence="1">
    <location>
        <position position="408"/>
    </location>
</feature>
<feature type="modified residue" description="Phosphotyrosine" evidence="1">
    <location>
        <position position="413"/>
    </location>
</feature>
<feature type="modified residue" description="Phosphoserine" evidence="1">
    <location>
        <position position="484"/>
    </location>
</feature>
<feature type="splice variant" id="VSP_014254" description="In isoform 3." evidence="7">
    <location>
        <begin position="1"/>
        <end position="478"/>
    </location>
</feature>
<feature type="splice variant" id="VSP_036211" description="In isoform 4." evidence="8">
    <original>N</original>
    <variation>NGHSGGFLPTGVPRWVQVPERVIYATITL</variation>
    <location>
        <position position="135"/>
    </location>
</feature>
<feature type="splice variant" id="VSP_014255" description="In isoform 2 and isoform 4." evidence="8 9">
    <location>
        <begin position="766"/>
        <end position="769"/>
    </location>
</feature>
<feature type="splice variant" id="VSP_014256" description="In isoform 3." evidence="7">
    <original>EWEKKGAS</original>
    <variation>VSSHSQPPLGPAEMSLR</variation>
    <location>
        <begin position="811"/>
        <end position="818"/>
    </location>
</feature>
<feature type="sequence variant" id="VAR_050505" description="In dbSNP:rs11196689.">
    <original>G</original>
    <variation>R</variation>
    <location>
        <position position="138"/>
    </location>
</feature>
<feature type="sequence variant" id="VAR_050506" description="In dbSNP:rs7075067.">
    <original>S</original>
    <variation>R</variation>
    <location>
        <position position="366"/>
    </location>
</feature>
<feature type="sequence variant" id="VAR_050507" description="In dbSNP:rs2781806.">
    <original>T</original>
    <variation>S</variation>
    <location>
        <position position="522"/>
    </location>
</feature>
<feature type="sequence variant" id="VAR_054214" description="In dbSNP:rs11599051.">
    <original>E</original>
    <variation>K</variation>
    <location>
        <position position="726"/>
    </location>
</feature>
<feature type="mutagenesis site" description="Reduced interaction with SRC." evidence="5">
    <original>Y</original>
    <variation>F</variation>
    <location>
        <position position="4"/>
    </location>
</feature>
<feature type="sequence conflict" description="In Ref. 4; BAF84401." evidence="10" ref="4">
    <original>E</original>
    <variation>K</variation>
    <location>
        <position position="13"/>
    </location>
</feature>
<feature type="sequence conflict" description="In Ref. 4; BAF84401." evidence="10" ref="4">
    <original>S</original>
    <variation>G</variation>
    <location>
        <position position="224"/>
    </location>
</feature>
<feature type="sequence conflict" description="In Ref. 4; BAB55135." evidence="10" ref="4">
    <original>N</original>
    <variation>D</variation>
    <location>
        <position position="567"/>
    </location>
</feature>
<feature type="sequence conflict" description="In Ref. 4; BAB55135." evidence="10" ref="4">
    <location>
        <position position="596"/>
    </location>
</feature>
<feature type="sequence conflict" description="In Ref. 4; BAB55135." evidence="10" ref="4">
    <original>D</original>
    <variation>Y</variation>
    <location>
        <position position="605"/>
    </location>
</feature>
<feature type="sequence conflict" description="In Ref. 1; AAQ05765." evidence="10" ref="1">
    <original>L</original>
    <variation>Q</variation>
    <location>
        <position position="608"/>
    </location>
</feature>
<feature type="sequence conflict" description="In Ref. 4; BAF84401." evidence="10" ref="4">
    <original>D</original>
    <variation>G</variation>
    <location>
        <position position="630"/>
    </location>
</feature>
<feature type="sequence conflict" description="In Ref. 1; AAQ05765." evidence="10" ref="1">
    <original>V</original>
    <variation>L</variation>
    <location>
        <position position="758"/>
    </location>
</feature>
<feature type="strand" evidence="11">
    <location>
        <begin position="359"/>
        <end position="364"/>
    </location>
</feature>
<feature type="strand" evidence="11">
    <location>
        <begin position="367"/>
        <end position="375"/>
    </location>
</feature>
<feature type="strand" evidence="11">
    <location>
        <begin position="380"/>
        <end position="383"/>
    </location>
</feature>
<feature type="strand" evidence="11">
    <location>
        <begin position="390"/>
        <end position="396"/>
    </location>
</feature>
<feature type="turn" evidence="11">
    <location>
        <begin position="398"/>
        <end position="400"/>
    </location>
</feature>
<feature type="strand" evidence="11">
    <location>
        <begin position="402"/>
        <end position="404"/>
    </location>
</feature>
<feature type="strand" evidence="11">
    <location>
        <begin position="414"/>
        <end position="419"/>
    </location>
</feature>
<feature type="strand" evidence="11">
    <location>
        <begin position="422"/>
        <end position="428"/>
    </location>
</feature>
<feature type="helix" evidence="11">
    <location>
        <begin position="432"/>
        <end position="445"/>
    </location>
</feature>
<organism>
    <name type="scientific">Homo sapiens</name>
    <name type="common">Human</name>
    <dbReference type="NCBI Taxonomy" id="9606"/>
    <lineage>
        <taxon>Eukaryota</taxon>
        <taxon>Metazoa</taxon>
        <taxon>Chordata</taxon>
        <taxon>Craniata</taxon>
        <taxon>Vertebrata</taxon>
        <taxon>Euteleostomi</taxon>
        <taxon>Mammalia</taxon>
        <taxon>Eutheria</taxon>
        <taxon>Euarchontoglires</taxon>
        <taxon>Primates</taxon>
        <taxon>Haplorrhini</taxon>
        <taxon>Catarrhini</taxon>
        <taxon>Hominidae</taxon>
        <taxon>Homo</taxon>
    </lineage>
</organism>
<evidence type="ECO:0000250" key="1">
    <source>
        <dbReference type="UniProtKB" id="Q5DTU0"/>
    </source>
</evidence>
<evidence type="ECO:0000255" key="2"/>
<evidence type="ECO:0000255" key="3">
    <source>
        <dbReference type="PROSITE-ProRule" id="PRU00145"/>
    </source>
</evidence>
<evidence type="ECO:0000256" key="4">
    <source>
        <dbReference type="SAM" id="MobiDB-lite"/>
    </source>
</evidence>
<evidence type="ECO:0000269" key="5">
    <source>
    </source>
</evidence>
<evidence type="ECO:0000269" key="6">
    <source>
    </source>
</evidence>
<evidence type="ECO:0000303" key="7">
    <source>
    </source>
</evidence>
<evidence type="ECO:0000303" key="8">
    <source>
    </source>
</evidence>
<evidence type="ECO:0000303" key="9">
    <source>
    </source>
</evidence>
<evidence type="ECO:0000305" key="10"/>
<evidence type="ECO:0007829" key="11">
    <source>
        <dbReference type="PDB" id="2COF"/>
    </source>
</evidence>